<sequence length="301" mass="33914">MSETKTYCGFIAIVGRPNVGKSTLLNKLLGQKISITSRKAQTTRHRIVGIHTEGEYQAIYVDTPGLHMEEKRAINRLMNKAASSSIGDVELVIFVVEGTRWTPDDEMVLNKLREGKAPVILAINKVDNVQDKAELLPHLQFLGSQMNFLDIVPISAETGMNVDTIAAIVRKHLPEAIHHFPEDYITDRSQRFMASEIIREKLMRFLGAELPYSVTVEIERFVTNERGGYDINGLILVEREGQKKMVIGNKGAKIKTIGIEARKDMQDMFEAPVHLELWVKVKSGWADDERALRSLGYVDDL</sequence>
<gene>
    <name evidence="1" type="primary">era</name>
    <name type="ordered locus">ESA_00693</name>
</gene>
<comment type="function">
    <text evidence="1">An essential GTPase that binds both GDP and GTP, with rapid nucleotide exchange. Plays a role in 16S rRNA processing and 30S ribosomal subunit biogenesis and possibly also in cell cycle regulation and energy metabolism.</text>
</comment>
<comment type="subunit">
    <text evidence="1">Monomer.</text>
</comment>
<comment type="subcellular location">
    <subcellularLocation>
        <location>Cytoplasm</location>
    </subcellularLocation>
    <subcellularLocation>
        <location evidence="1">Cell inner membrane</location>
        <topology evidence="1">Peripheral membrane protein</topology>
    </subcellularLocation>
</comment>
<comment type="similarity">
    <text evidence="1 2">Belongs to the TRAFAC class TrmE-Era-EngA-EngB-Septin-like GTPase superfamily. Era GTPase family.</text>
</comment>
<accession>A7MH00</accession>
<organism>
    <name type="scientific">Cronobacter sakazakii (strain ATCC BAA-894)</name>
    <name type="common">Enterobacter sakazakii</name>
    <dbReference type="NCBI Taxonomy" id="290339"/>
    <lineage>
        <taxon>Bacteria</taxon>
        <taxon>Pseudomonadati</taxon>
        <taxon>Pseudomonadota</taxon>
        <taxon>Gammaproteobacteria</taxon>
        <taxon>Enterobacterales</taxon>
        <taxon>Enterobacteriaceae</taxon>
        <taxon>Cronobacter</taxon>
    </lineage>
</organism>
<evidence type="ECO:0000255" key="1">
    <source>
        <dbReference type="HAMAP-Rule" id="MF_00367"/>
    </source>
</evidence>
<evidence type="ECO:0000255" key="2">
    <source>
        <dbReference type="PROSITE-ProRule" id="PRU01050"/>
    </source>
</evidence>
<protein>
    <recommendedName>
        <fullName evidence="1">GTPase Era</fullName>
    </recommendedName>
</protein>
<proteinExistence type="inferred from homology"/>
<dbReference type="EMBL" id="CP000783">
    <property type="protein sequence ID" value="ABU75971.1"/>
    <property type="molecule type" value="Genomic_DNA"/>
</dbReference>
<dbReference type="RefSeq" id="WP_004387381.1">
    <property type="nucleotide sequence ID" value="NC_009778.1"/>
</dbReference>
<dbReference type="SMR" id="A7MH00"/>
<dbReference type="GeneID" id="56729582"/>
<dbReference type="KEGG" id="esa:ESA_00693"/>
<dbReference type="HOGENOM" id="CLU_038009_1_2_6"/>
<dbReference type="Proteomes" id="UP000000260">
    <property type="component" value="Chromosome"/>
</dbReference>
<dbReference type="GO" id="GO:0005829">
    <property type="term" value="C:cytosol"/>
    <property type="evidence" value="ECO:0007669"/>
    <property type="project" value="TreeGrafter"/>
</dbReference>
<dbReference type="GO" id="GO:0005886">
    <property type="term" value="C:plasma membrane"/>
    <property type="evidence" value="ECO:0007669"/>
    <property type="project" value="UniProtKB-SubCell"/>
</dbReference>
<dbReference type="GO" id="GO:0005525">
    <property type="term" value="F:GTP binding"/>
    <property type="evidence" value="ECO:0007669"/>
    <property type="project" value="UniProtKB-UniRule"/>
</dbReference>
<dbReference type="GO" id="GO:0003924">
    <property type="term" value="F:GTPase activity"/>
    <property type="evidence" value="ECO:0007669"/>
    <property type="project" value="UniProtKB-UniRule"/>
</dbReference>
<dbReference type="GO" id="GO:0043024">
    <property type="term" value="F:ribosomal small subunit binding"/>
    <property type="evidence" value="ECO:0007669"/>
    <property type="project" value="TreeGrafter"/>
</dbReference>
<dbReference type="GO" id="GO:0070181">
    <property type="term" value="F:small ribosomal subunit rRNA binding"/>
    <property type="evidence" value="ECO:0007669"/>
    <property type="project" value="UniProtKB-UniRule"/>
</dbReference>
<dbReference type="GO" id="GO:0000028">
    <property type="term" value="P:ribosomal small subunit assembly"/>
    <property type="evidence" value="ECO:0007669"/>
    <property type="project" value="TreeGrafter"/>
</dbReference>
<dbReference type="CDD" id="cd04163">
    <property type="entry name" value="Era"/>
    <property type="match status" value="1"/>
</dbReference>
<dbReference type="CDD" id="cd22534">
    <property type="entry name" value="KH-II_Era"/>
    <property type="match status" value="1"/>
</dbReference>
<dbReference type="FunFam" id="3.30.300.20:FF:000003">
    <property type="entry name" value="GTPase Era"/>
    <property type="match status" value="1"/>
</dbReference>
<dbReference type="FunFam" id="3.40.50.300:FF:000094">
    <property type="entry name" value="GTPase Era"/>
    <property type="match status" value="1"/>
</dbReference>
<dbReference type="Gene3D" id="3.30.300.20">
    <property type="match status" value="1"/>
</dbReference>
<dbReference type="Gene3D" id="3.40.50.300">
    <property type="entry name" value="P-loop containing nucleotide triphosphate hydrolases"/>
    <property type="match status" value="1"/>
</dbReference>
<dbReference type="HAMAP" id="MF_00367">
    <property type="entry name" value="GTPase_Era"/>
    <property type="match status" value="1"/>
</dbReference>
<dbReference type="InterPro" id="IPR030388">
    <property type="entry name" value="G_ERA_dom"/>
</dbReference>
<dbReference type="InterPro" id="IPR006073">
    <property type="entry name" value="GTP-bd"/>
</dbReference>
<dbReference type="InterPro" id="IPR005662">
    <property type="entry name" value="GTPase_Era-like"/>
</dbReference>
<dbReference type="InterPro" id="IPR015946">
    <property type="entry name" value="KH_dom-like_a/b"/>
</dbReference>
<dbReference type="InterPro" id="IPR004044">
    <property type="entry name" value="KH_dom_type_2"/>
</dbReference>
<dbReference type="InterPro" id="IPR009019">
    <property type="entry name" value="KH_sf_prok-type"/>
</dbReference>
<dbReference type="InterPro" id="IPR027417">
    <property type="entry name" value="P-loop_NTPase"/>
</dbReference>
<dbReference type="InterPro" id="IPR005225">
    <property type="entry name" value="Small_GTP-bd"/>
</dbReference>
<dbReference type="NCBIfam" id="TIGR00436">
    <property type="entry name" value="era"/>
    <property type="match status" value="1"/>
</dbReference>
<dbReference type="NCBIfam" id="NF000908">
    <property type="entry name" value="PRK00089.1"/>
    <property type="match status" value="1"/>
</dbReference>
<dbReference type="NCBIfam" id="TIGR00231">
    <property type="entry name" value="small_GTP"/>
    <property type="match status" value="1"/>
</dbReference>
<dbReference type="PANTHER" id="PTHR42698">
    <property type="entry name" value="GTPASE ERA"/>
    <property type="match status" value="1"/>
</dbReference>
<dbReference type="PANTHER" id="PTHR42698:SF1">
    <property type="entry name" value="GTPASE ERA, MITOCHONDRIAL"/>
    <property type="match status" value="1"/>
</dbReference>
<dbReference type="Pfam" id="PF07650">
    <property type="entry name" value="KH_2"/>
    <property type="match status" value="1"/>
</dbReference>
<dbReference type="Pfam" id="PF01926">
    <property type="entry name" value="MMR_HSR1"/>
    <property type="match status" value="1"/>
</dbReference>
<dbReference type="SUPFAM" id="SSF52540">
    <property type="entry name" value="P-loop containing nucleoside triphosphate hydrolases"/>
    <property type="match status" value="1"/>
</dbReference>
<dbReference type="SUPFAM" id="SSF54814">
    <property type="entry name" value="Prokaryotic type KH domain (KH-domain type II)"/>
    <property type="match status" value="1"/>
</dbReference>
<dbReference type="PROSITE" id="PS51713">
    <property type="entry name" value="G_ERA"/>
    <property type="match status" value="1"/>
</dbReference>
<dbReference type="PROSITE" id="PS50823">
    <property type="entry name" value="KH_TYPE_2"/>
    <property type="match status" value="1"/>
</dbReference>
<keyword id="KW-0997">Cell inner membrane</keyword>
<keyword id="KW-1003">Cell membrane</keyword>
<keyword id="KW-0963">Cytoplasm</keyword>
<keyword id="KW-0342">GTP-binding</keyword>
<keyword id="KW-0472">Membrane</keyword>
<keyword id="KW-0547">Nucleotide-binding</keyword>
<keyword id="KW-1185">Reference proteome</keyword>
<keyword id="KW-0690">Ribosome biogenesis</keyword>
<keyword id="KW-0694">RNA-binding</keyword>
<keyword id="KW-0699">rRNA-binding</keyword>
<reference key="1">
    <citation type="journal article" date="2010" name="PLoS ONE">
        <title>Genome sequence of Cronobacter sakazakii BAA-894 and comparative genomic hybridization analysis with other Cronobacter species.</title>
        <authorList>
            <person name="Kucerova E."/>
            <person name="Clifton S.W."/>
            <person name="Xia X.Q."/>
            <person name="Long F."/>
            <person name="Porwollik S."/>
            <person name="Fulton L."/>
            <person name="Fronick C."/>
            <person name="Minx P."/>
            <person name="Kyung K."/>
            <person name="Warren W."/>
            <person name="Fulton R."/>
            <person name="Feng D."/>
            <person name="Wollam A."/>
            <person name="Shah N."/>
            <person name="Bhonagiri V."/>
            <person name="Nash W.E."/>
            <person name="Hallsworth-Pepin K."/>
            <person name="Wilson R.K."/>
            <person name="McClelland M."/>
            <person name="Forsythe S.J."/>
        </authorList>
    </citation>
    <scope>NUCLEOTIDE SEQUENCE [LARGE SCALE GENOMIC DNA]</scope>
    <source>
        <strain>ATCC BAA-894</strain>
    </source>
</reference>
<name>ERA_CROS8</name>
<feature type="chain" id="PRO_1000079697" description="GTPase Era">
    <location>
        <begin position="1"/>
        <end position="301"/>
    </location>
</feature>
<feature type="domain" description="Era-type G" evidence="2">
    <location>
        <begin position="7"/>
        <end position="175"/>
    </location>
</feature>
<feature type="domain" description="KH type-2" evidence="1">
    <location>
        <begin position="206"/>
        <end position="283"/>
    </location>
</feature>
<feature type="region of interest" description="G1" evidence="2">
    <location>
        <begin position="15"/>
        <end position="22"/>
    </location>
</feature>
<feature type="region of interest" description="G2" evidence="2">
    <location>
        <begin position="41"/>
        <end position="45"/>
    </location>
</feature>
<feature type="region of interest" description="G3" evidence="2">
    <location>
        <begin position="62"/>
        <end position="65"/>
    </location>
</feature>
<feature type="region of interest" description="G4" evidence="2">
    <location>
        <begin position="124"/>
        <end position="127"/>
    </location>
</feature>
<feature type="region of interest" description="G5" evidence="2">
    <location>
        <begin position="154"/>
        <end position="156"/>
    </location>
</feature>
<feature type="binding site" evidence="1">
    <location>
        <begin position="15"/>
        <end position="22"/>
    </location>
    <ligand>
        <name>GTP</name>
        <dbReference type="ChEBI" id="CHEBI:37565"/>
    </ligand>
</feature>
<feature type="binding site" evidence="1">
    <location>
        <begin position="62"/>
        <end position="66"/>
    </location>
    <ligand>
        <name>GTP</name>
        <dbReference type="ChEBI" id="CHEBI:37565"/>
    </ligand>
</feature>
<feature type="binding site" evidence="1">
    <location>
        <begin position="124"/>
        <end position="127"/>
    </location>
    <ligand>
        <name>GTP</name>
        <dbReference type="ChEBI" id="CHEBI:37565"/>
    </ligand>
</feature>